<sequence>MVQLTEETYLYDPNLLLKLDFHRSPANFKPFISAANPGEPWMKVRPLKDTDYDRGFLQLLSQLTHVGNVNRTQFLTRFSQMKASGDYFVTVIEDTRKNEIIGAASLVIERKFIHNCAVRGRLEDVVVNDTYRGKQLGKLIVVTVSLLAEELGCYKMSLDCKDKLIKFYESLGYVAIPGNSNSMTIRYDEGPTLKRNATSAGSSGTVGDSCQTVSLDFAS</sequence>
<reference key="1">
    <citation type="journal article" date="2000" name="Science">
        <title>The genome sequence of Drosophila melanogaster.</title>
        <authorList>
            <person name="Adams M.D."/>
            <person name="Celniker S.E."/>
            <person name="Holt R.A."/>
            <person name="Evans C.A."/>
            <person name="Gocayne J.D."/>
            <person name="Amanatides P.G."/>
            <person name="Scherer S.E."/>
            <person name="Li P.W."/>
            <person name="Hoskins R.A."/>
            <person name="Galle R.F."/>
            <person name="George R.A."/>
            <person name="Lewis S.E."/>
            <person name="Richards S."/>
            <person name="Ashburner M."/>
            <person name="Henderson S.N."/>
            <person name="Sutton G.G."/>
            <person name="Wortman J.R."/>
            <person name="Yandell M.D."/>
            <person name="Zhang Q."/>
            <person name="Chen L.X."/>
            <person name="Brandon R.C."/>
            <person name="Rogers Y.-H.C."/>
            <person name="Blazej R.G."/>
            <person name="Champe M."/>
            <person name="Pfeiffer B.D."/>
            <person name="Wan K.H."/>
            <person name="Doyle C."/>
            <person name="Baxter E.G."/>
            <person name="Helt G."/>
            <person name="Nelson C.R."/>
            <person name="Miklos G.L.G."/>
            <person name="Abril J.F."/>
            <person name="Agbayani A."/>
            <person name="An H.-J."/>
            <person name="Andrews-Pfannkoch C."/>
            <person name="Baldwin D."/>
            <person name="Ballew R.M."/>
            <person name="Basu A."/>
            <person name="Baxendale J."/>
            <person name="Bayraktaroglu L."/>
            <person name="Beasley E.M."/>
            <person name="Beeson K.Y."/>
            <person name="Benos P.V."/>
            <person name="Berman B.P."/>
            <person name="Bhandari D."/>
            <person name="Bolshakov S."/>
            <person name="Borkova D."/>
            <person name="Botchan M.R."/>
            <person name="Bouck J."/>
            <person name="Brokstein P."/>
            <person name="Brottier P."/>
            <person name="Burtis K.C."/>
            <person name="Busam D.A."/>
            <person name="Butler H."/>
            <person name="Cadieu E."/>
            <person name="Center A."/>
            <person name="Chandra I."/>
            <person name="Cherry J.M."/>
            <person name="Cawley S."/>
            <person name="Dahlke C."/>
            <person name="Davenport L.B."/>
            <person name="Davies P."/>
            <person name="de Pablos B."/>
            <person name="Delcher A."/>
            <person name="Deng Z."/>
            <person name="Mays A.D."/>
            <person name="Dew I."/>
            <person name="Dietz S.M."/>
            <person name="Dodson K."/>
            <person name="Doup L.E."/>
            <person name="Downes M."/>
            <person name="Dugan-Rocha S."/>
            <person name="Dunkov B.C."/>
            <person name="Dunn P."/>
            <person name="Durbin K.J."/>
            <person name="Evangelista C.C."/>
            <person name="Ferraz C."/>
            <person name="Ferriera S."/>
            <person name="Fleischmann W."/>
            <person name="Fosler C."/>
            <person name="Gabrielian A.E."/>
            <person name="Garg N.S."/>
            <person name="Gelbart W.M."/>
            <person name="Glasser K."/>
            <person name="Glodek A."/>
            <person name="Gong F."/>
            <person name="Gorrell J.H."/>
            <person name="Gu Z."/>
            <person name="Guan P."/>
            <person name="Harris M."/>
            <person name="Harris N.L."/>
            <person name="Harvey D.A."/>
            <person name="Heiman T.J."/>
            <person name="Hernandez J.R."/>
            <person name="Houck J."/>
            <person name="Hostin D."/>
            <person name="Houston K.A."/>
            <person name="Howland T.J."/>
            <person name="Wei M.-H."/>
            <person name="Ibegwam C."/>
            <person name="Jalali M."/>
            <person name="Kalush F."/>
            <person name="Karpen G.H."/>
            <person name="Ke Z."/>
            <person name="Kennison J.A."/>
            <person name="Ketchum K.A."/>
            <person name="Kimmel B.E."/>
            <person name="Kodira C.D."/>
            <person name="Kraft C.L."/>
            <person name="Kravitz S."/>
            <person name="Kulp D."/>
            <person name="Lai Z."/>
            <person name="Lasko P."/>
            <person name="Lei Y."/>
            <person name="Levitsky A.A."/>
            <person name="Li J.H."/>
            <person name="Li Z."/>
            <person name="Liang Y."/>
            <person name="Lin X."/>
            <person name="Liu X."/>
            <person name="Mattei B."/>
            <person name="McIntosh T.C."/>
            <person name="McLeod M.P."/>
            <person name="McPherson D."/>
            <person name="Merkulov G."/>
            <person name="Milshina N.V."/>
            <person name="Mobarry C."/>
            <person name="Morris J."/>
            <person name="Moshrefi A."/>
            <person name="Mount S.M."/>
            <person name="Moy M."/>
            <person name="Murphy B."/>
            <person name="Murphy L."/>
            <person name="Muzny D.M."/>
            <person name="Nelson D.L."/>
            <person name="Nelson D.R."/>
            <person name="Nelson K.A."/>
            <person name="Nixon K."/>
            <person name="Nusskern D.R."/>
            <person name="Pacleb J.M."/>
            <person name="Palazzolo M."/>
            <person name="Pittman G.S."/>
            <person name="Pan S."/>
            <person name="Pollard J."/>
            <person name="Puri V."/>
            <person name="Reese M.G."/>
            <person name="Reinert K."/>
            <person name="Remington K."/>
            <person name="Saunders R.D.C."/>
            <person name="Scheeler F."/>
            <person name="Shen H."/>
            <person name="Shue B.C."/>
            <person name="Siden-Kiamos I."/>
            <person name="Simpson M."/>
            <person name="Skupski M.P."/>
            <person name="Smith T.J."/>
            <person name="Spier E."/>
            <person name="Spradling A.C."/>
            <person name="Stapleton M."/>
            <person name="Strong R."/>
            <person name="Sun E."/>
            <person name="Svirskas R."/>
            <person name="Tector C."/>
            <person name="Turner R."/>
            <person name="Venter E."/>
            <person name="Wang A.H."/>
            <person name="Wang X."/>
            <person name="Wang Z.-Y."/>
            <person name="Wassarman D.A."/>
            <person name="Weinstock G.M."/>
            <person name="Weissenbach J."/>
            <person name="Williams S.M."/>
            <person name="Woodage T."/>
            <person name="Worley K.C."/>
            <person name="Wu D."/>
            <person name="Yang S."/>
            <person name="Yao Q.A."/>
            <person name="Ye J."/>
            <person name="Yeh R.-F."/>
            <person name="Zaveri J.S."/>
            <person name="Zhan M."/>
            <person name="Zhang G."/>
            <person name="Zhao Q."/>
            <person name="Zheng L."/>
            <person name="Zheng X.H."/>
            <person name="Zhong F.N."/>
            <person name="Zhong W."/>
            <person name="Zhou X."/>
            <person name="Zhu S.C."/>
            <person name="Zhu X."/>
            <person name="Smith H.O."/>
            <person name="Gibbs R.A."/>
            <person name="Myers E.W."/>
            <person name="Rubin G.M."/>
            <person name="Venter J.C."/>
        </authorList>
    </citation>
    <scope>NUCLEOTIDE SEQUENCE [LARGE SCALE GENOMIC DNA]</scope>
    <source>
        <strain>Berkeley</strain>
    </source>
</reference>
<reference key="2">
    <citation type="journal article" date="2002" name="Genome Biol.">
        <title>Annotation of the Drosophila melanogaster euchromatic genome: a systematic review.</title>
        <authorList>
            <person name="Misra S."/>
            <person name="Crosby M.A."/>
            <person name="Mungall C.J."/>
            <person name="Matthews B.B."/>
            <person name="Campbell K.S."/>
            <person name="Hradecky P."/>
            <person name="Huang Y."/>
            <person name="Kaminker J.S."/>
            <person name="Millburn G.H."/>
            <person name="Prochnik S.E."/>
            <person name="Smith C.D."/>
            <person name="Tupy J.L."/>
            <person name="Whitfield E.J."/>
            <person name="Bayraktaroglu L."/>
            <person name="Berman B.P."/>
            <person name="Bettencourt B.R."/>
            <person name="Celniker S.E."/>
            <person name="de Grey A.D.N.J."/>
            <person name="Drysdale R.A."/>
            <person name="Harris N.L."/>
            <person name="Richter J."/>
            <person name="Russo S."/>
            <person name="Schroeder A.J."/>
            <person name="Shu S.Q."/>
            <person name="Stapleton M."/>
            <person name="Yamada C."/>
            <person name="Ashburner M."/>
            <person name="Gelbart W.M."/>
            <person name="Rubin G.M."/>
            <person name="Lewis S.E."/>
        </authorList>
    </citation>
    <scope>GENOME REANNOTATION</scope>
    <source>
        <strain>Berkeley</strain>
    </source>
</reference>
<reference key="3">
    <citation type="journal article" date="2002" name="Genome Biol.">
        <title>A Drosophila full-length cDNA resource.</title>
        <authorList>
            <person name="Stapleton M."/>
            <person name="Carlson J.W."/>
            <person name="Brokstein P."/>
            <person name="Yu C."/>
            <person name="Champe M."/>
            <person name="George R.A."/>
            <person name="Guarin H."/>
            <person name="Kronmiller B."/>
            <person name="Pacleb J.M."/>
            <person name="Park S."/>
            <person name="Wan K.H."/>
            <person name="Rubin G.M."/>
            <person name="Celniker S.E."/>
        </authorList>
    </citation>
    <scope>NUCLEOTIDE SEQUENCE [LARGE SCALE MRNA]</scope>
    <source>
        <strain>Berkeley</strain>
        <tissue>Embryo</tissue>
    </source>
</reference>
<organism>
    <name type="scientific">Drosophila melanogaster</name>
    <name type="common">Fruit fly</name>
    <dbReference type="NCBI Taxonomy" id="7227"/>
    <lineage>
        <taxon>Eukaryota</taxon>
        <taxon>Metazoa</taxon>
        <taxon>Ecdysozoa</taxon>
        <taxon>Arthropoda</taxon>
        <taxon>Hexapoda</taxon>
        <taxon>Insecta</taxon>
        <taxon>Pterygota</taxon>
        <taxon>Neoptera</taxon>
        <taxon>Endopterygota</taxon>
        <taxon>Diptera</taxon>
        <taxon>Brachycera</taxon>
        <taxon>Muscomorpha</taxon>
        <taxon>Ephydroidea</taxon>
        <taxon>Drosophilidae</taxon>
        <taxon>Drosophila</taxon>
        <taxon>Sophophora</taxon>
    </lineage>
</organism>
<comment type="catalytic activity">
    <reaction evidence="1">
        <text>D-glucosamine 6-phosphate + acetyl-CoA = N-acetyl-D-glucosamine 6-phosphate + CoA + H(+)</text>
        <dbReference type="Rhea" id="RHEA:10292"/>
        <dbReference type="ChEBI" id="CHEBI:15378"/>
        <dbReference type="ChEBI" id="CHEBI:57287"/>
        <dbReference type="ChEBI" id="CHEBI:57288"/>
        <dbReference type="ChEBI" id="CHEBI:57513"/>
        <dbReference type="ChEBI" id="CHEBI:58725"/>
        <dbReference type="EC" id="2.3.1.4"/>
    </reaction>
</comment>
<comment type="pathway">
    <text>Nucleotide-sugar biosynthesis; UDP-N-acetyl-alpha-D-glucosamine biosynthesis; N-acetyl-alpha-D-glucosamine 1-phosphate from alpha-D-glucosamine 6-phosphate (route I): step 1/2.</text>
</comment>
<comment type="similarity">
    <text evidence="3">Belongs to the acetyltransferase family. GNA1 subfamily.</text>
</comment>
<protein>
    <recommendedName>
        <fullName>Probable glucosamine 6-phosphate N-acetyltransferase</fullName>
        <ecNumber evidence="1">2.3.1.4</ecNumber>
    </recommendedName>
    <alternativeName>
        <fullName>Phosphoglucosamine acetylase</fullName>
    </alternativeName>
    <alternativeName>
        <fullName>Phosphoglucosamine transacetylase</fullName>
    </alternativeName>
</protein>
<keyword id="KW-0012">Acyltransferase</keyword>
<keyword id="KW-1185">Reference proteome</keyword>
<keyword id="KW-0808">Transferase</keyword>
<feature type="chain" id="PRO_0000074557" description="Probable glucosamine 6-phosphate N-acetyltransferase">
    <location>
        <begin position="1"/>
        <end position="219"/>
    </location>
</feature>
<feature type="domain" description="N-acetyltransferase" evidence="2">
    <location>
        <begin position="42"/>
        <end position="198"/>
    </location>
</feature>
<feature type="binding site" evidence="1">
    <location>
        <position position="64"/>
    </location>
    <ligand>
        <name>substrate</name>
    </ligand>
</feature>
<feature type="binding site" evidence="1">
    <location>
        <begin position="111"/>
        <end position="114"/>
    </location>
    <ligand>
        <name>substrate</name>
    </ligand>
</feature>
<feature type="binding site" evidence="1">
    <location>
        <begin position="123"/>
        <end position="125"/>
    </location>
    <ligand>
        <name>substrate</name>
    </ligand>
</feature>
<feature type="binding site" evidence="1">
    <location>
        <begin position="133"/>
        <end position="138"/>
    </location>
    <ligand>
        <name>acetyl-CoA</name>
        <dbReference type="ChEBI" id="CHEBI:57288"/>
    </ligand>
</feature>
<feature type="binding site" evidence="1">
    <location>
        <begin position="154"/>
        <end position="155"/>
    </location>
    <ligand>
        <name>substrate</name>
    </ligand>
</feature>
<feature type="binding site" evidence="1">
    <location>
        <position position="186"/>
    </location>
    <ligand>
        <name>substrate</name>
    </ligand>
</feature>
<accession>Q9VAI0</accession>
<gene>
    <name evidence="4" type="primary">Gnpnat</name>
    <name evidence="4" type="ORF">CG1969</name>
</gene>
<dbReference type="EC" id="2.3.1.4" evidence="1"/>
<dbReference type="EMBL" id="AE014297">
    <property type="protein sequence ID" value="AAF56929.1"/>
    <property type="molecule type" value="Genomic_DNA"/>
</dbReference>
<dbReference type="EMBL" id="AY058687">
    <property type="protein sequence ID" value="AAL13916.1"/>
    <property type="molecule type" value="mRNA"/>
</dbReference>
<dbReference type="RefSeq" id="NP_651719.1">
    <property type="nucleotide sequence ID" value="NM_143462.4"/>
</dbReference>
<dbReference type="SMR" id="Q9VAI0"/>
<dbReference type="BioGRID" id="68368">
    <property type="interactions" value="4"/>
</dbReference>
<dbReference type="DIP" id="DIP-22984N"/>
<dbReference type="FunCoup" id="Q9VAI0">
    <property type="interactions" value="968"/>
</dbReference>
<dbReference type="IntAct" id="Q9VAI0">
    <property type="interactions" value="4"/>
</dbReference>
<dbReference type="STRING" id="7227.FBpp0303328"/>
<dbReference type="PaxDb" id="7227-FBpp0297241"/>
<dbReference type="DNASU" id="43504"/>
<dbReference type="EnsemblMetazoa" id="FBtr0085475">
    <property type="protein sequence ID" value="FBpp0084841"/>
    <property type="gene ID" value="FBgn0039690"/>
</dbReference>
<dbReference type="GeneID" id="43504"/>
<dbReference type="KEGG" id="dme:Dmel_CG1969"/>
<dbReference type="UCSC" id="CG1969-RA">
    <property type="organism name" value="d. melanogaster"/>
</dbReference>
<dbReference type="AGR" id="FB:FBgn0039690"/>
<dbReference type="CTD" id="43504"/>
<dbReference type="FlyBase" id="FBgn0039690">
    <property type="gene designation" value="Gnpnat"/>
</dbReference>
<dbReference type="VEuPathDB" id="VectorBase:FBgn0039690"/>
<dbReference type="eggNOG" id="KOG3396">
    <property type="taxonomic scope" value="Eukaryota"/>
</dbReference>
<dbReference type="GeneTree" id="ENSGT00390000008666"/>
<dbReference type="InParanoid" id="Q9VAI0"/>
<dbReference type="OrthoDB" id="10039976at2759"/>
<dbReference type="PhylomeDB" id="Q9VAI0"/>
<dbReference type="Reactome" id="R-DME-446210">
    <property type="pathway name" value="Synthesis of UDP-N-acetyl-glucosamine"/>
</dbReference>
<dbReference type="UniPathway" id="UPA00113">
    <property type="reaction ID" value="UER00529"/>
</dbReference>
<dbReference type="BioGRID-ORCS" id="43504">
    <property type="hits" value="0 hits in 1 CRISPR screen"/>
</dbReference>
<dbReference type="GenomeRNAi" id="43504"/>
<dbReference type="PRO" id="PR:Q9VAI0"/>
<dbReference type="Proteomes" id="UP000000803">
    <property type="component" value="Chromosome 3R"/>
</dbReference>
<dbReference type="Bgee" id="FBgn0039690">
    <property type="expression patterns" value="Expressed in male accessory gland secondary cell (Drosophila) in male reproductive gland and 108 other cell types or tissues"/>
</dbReference>
<dbReference type="ExpressionAtlas" id="Q9VAI0">
    <property type="expression patterns" value="baseline and differential"/>
</dbReference>
<dbReference type="GO" id="GO:0005737">
    <property type="term" value="C:cytoplasm"/>
    <property type="evidence" value="ECO:0000250"/>
    <property type="project" value="FlyBase"/>
</dbReference>
<dbReference type="GO" id="GO:0004343">
    <property type="term" value="F:glucosamine 6-phosphate N-acetyltransferase activity"/>
    <property type="evidence" value="ECO:0000250"/>
    <property type="project" value="FlyBase"/>
</dbReference>
<dbReference type="GO" id="GO:0006048">
    <property type="term" value="P:UDP-N-acetylglucosamine biosynthetic process"/>
    <property type="evidence" value="ECO:0000250"/>
    <property type="project" value="FlyBase"/>
</dbReference>
<dbReference type="CDD" id="cd04301">
    <property type="entry name" value="NAT_SF"/>
    <property type="match status" value="1"/>
</dbReference>
<dbReference type="FunFam" id="3.40.630.30:FF:000043">
    <property type="entry name" value="Glucosamine 6-phosphate N-acetyltransferase"/>
    <property type="match status" value="1"/>
</dbReference>
<dbReference type="Gene3D" id="3.40.630.30">
    <property type="match status" value="1"/>
</dbReference>
<dbReference type="InterPro" id="IPR016181">
    <property type="entry name" value="Acyl_CoA_acyltransferase"/>
</dbReference>
<dbReference type="InterPro" id="IPR000182">
    <property type="entry name" value="GNAT_dom"/>
</dbReference>
<dbReference type="InterPro" id="IPR039143">
    <property type="entry name" value="GNPNAT1-like"/>
</dbReference>
<dbReference type="PANTHER" id="PTHR13355">
    <property type="entry name" value="GLUCOSAMINE 6-PHOSPHATE N-ACETYLTRANSFERASE"/>
    <property type="match status" value="1"/>
</dbReference>
<dbReference type="PANTHER" id="PTHR13355:SF11">
    <property type="entry name" value="GLUCOSAMINE 6-PHOSPHATE N-ACETYLTRANSFERASE"/>
    <property type="match status" value="1"/>
</dbReference>
<dbReference type="Pfam" id="PF00583">
    <property type="entry name" value="Acetyltransf_1"/>
    <property type="match status" value="1"/>
</dbReference>
<dbReference type="SUPFAM" id="SSF55729">
    <property type="entry name" value="Acyl-CoA N-acyltransferases (Nat)"/>
    <property type="match status" value="1"/>
</dbReference>
<dbReference type="PROSITE" id="PS51186">
    <property type="entry name" value="GNAT"/>
    <property type="match status" value="1"/>
</dbReference>
<evidence type="ECO:0000250" key="1">
    <source>
        <dbReference type="UniProtKB" id="Q96EK6"/>
    </source>
</evidence>
<evidence type="ECO:0000255" key="2">
    <source>
        <dbReference type="PROSITE-ProRule" id="PRU00532"/>
    </source>
</evidence>
<evidence type="ECO:0000305" key="3"/>
<evidence type="ECO:0000312" key="4">
    <source>
        <dbReference type="FlyBase" id="FBgn0039690"/>
    </source>
</evidence>
<proteinExistence type="evidence at transcript level"/>
<name>GNA1_DROME</name>